<name>THOC6_DANRE</name>
<keyword id="KW-0053">Apoptosis</keyword>
<keyword id="KW-0217">Developmental protein</keyword>
<keyword id="KW-0507">mRNA processing</keyword>
<keyword id="KW-0508">mRNA splicing</keyword>
<keyword id="KW-0509">mRNA transport</keyword>
<keyword id="KW-0539">Nucleus</keyword>
<keyword id="KW-1185">Reference proteome</keyword>
<keyword id="KW-0677">Repeat</keyword>
<keyword id="KW-0694">RNA-binding</keyword>
<keyword id="KW-0813">Transport</keyword>
<keyword id="KW-0853">WD repeat</keyword>
<accession>Q5XJS5</accession>
<proteinExistence type="evidence at transcript level"/>
<reference key="1">
    <citation type="submission" date="2004-10" db="EMBL/GenBank/DDBJ databases">
        <authorList>
            <consortium name="NIH - Zebrafish Gene Collection (ZGC) project"/>
        </authorList>
    </citation>
    <scope>NUCLEOTIDE SEQUENCE [LARGE SCALE MRNA]</scope>
    <source>
        <tissue>Embryo</tissue>
    </source>
</reference>
<reference key="2">
    <citation type="journal article" date="2013" name="Orphanet J. Rare Dis.">
        <title>Intellectual disability associated with a homozygous missense mutation in THOC6.</title>
        <authorList>
            <person name="Beaulieu C.L."/>
            <person name="Huang L."/>
            <person name="Innes A.M."/>
            <person name="Akimenko M.A."/>
            <person name="Puffenberger E.G."/>
            <person name="Schwartz C."/>
            <person name="Jerry P."/>
            <person name="Ober C."/>
            <person name="Hegele R.A."/>
            <person name="McLeod D.R."/>
            <person name="Schwartzentruber J."/>
            <person name="Majewski J."/>
            <person name="Bulman D.E."/>
            <person name="Parboosingh J.S."/>
            <person name="Boycott K.M."/>
        </authorList>
    </citation>
    <scope>DEVELOPMENTAL STAGE</scope>
</reference>
<gene>
    <name type="primary">thoc6</name>
    <name type="synonym">wdr58</name>
    <name type="ORF">zgc:101618</name>
</gene>
<comment type="function">
    <text evidence="2">Component of the THO subcomplex of the TREX complex which is thought to couple mRNA transcription, processing and nuclear export, and which specifically associates with spliced mRNA and not with unspliced pre-mRNA. Plays a key structural role in the oligomerization of the THO-DDX39B complex. TREX is recruited to spliced mRNAs by a transcription-independent mechanism, binds to mRNA upstream of the exon-junction complex (EJC) and is recruited in a splicing- and cap-dependent manner to a region near the 5' end of the mRNA where it functions in mRNA export to the cytoplasm via the TAP/NXF1 pathway. Plays a role in apoptosis negative control involved in brain development.</text>
</comment>
<comment type="subunit">
    <text evidence="2">Component of the THO subcomplex, which is composed of thoc1, thoc2, thoc3, thoc5, thoc6 and thoc7. Component of the transcription/export (TREX) complex at least composed of alyref/thoc4, ddx39b, sarnp/cip29, chtop and the THO subcomplex.</text>
</comment>
<comment type="subcellular location">
    <subcellularLocation>
        <location evidence="1">Nucleus</location>
    </subcellularLocation>
    <subcellularLocation>
        <location evidence="1">Nucleus speckle</location>
    </subcellularLocation>
</comment>
<comment type="developmental stage">
    <text evidence="3">Highly expressed in the developing midbrain and the eyes at 24 hpf. The expression becomes restricted afterwards to the posterior part of the midbrain and the midbrain-hindbrain boundary.</text>
</comment>
<comment type="similarity">
    <text evidence="4">Belongs to the WD repeat THOC6 family.</text>
</comment>
<dbReference type="EMBL" id="BC083222">
    <property type="protein sequence ID" value="AAH83222.1"/>
    <property type="molecule type" value="mRNA"/>
</dbReference>
<dbReference type="RefSeq" id="NP_001006095.1">
    <property type="nucleotide sequence ID" value="NM_001006095.1"/>
</dbReference>
<dbReference type="SMR" id="Q5XJS5"/>
<dbReference type="FunCoup" id="Q5XJS5">
    <property type="interactions" value="940"/>
</dbReference>
<dbReference type="STRING" id="7955.ENSDARP00000055337"/>
<dbReference type="PaxDb" id="7955-ENSDARP00000055337"/>
<dbReference type="GeneID" id="100004014"/>
<dbReference type="KEGG" id="dre:100004014"/>
<dbReference type="AGR" id="ZFIN:ZDB-GENE-041010-198"/>
<dbReference type="CTD" id="79228"/>
<dbReference type="ZFIN" id="ZDB-GENE-041010-198">
    <property type="gene designation" value="thoc6"/>
</dbReference>
<dbReference type="eggNOG" id="KOG0649">
    <property type="taxonomic scope" value="Eukaryota"/>
</dbReference>
<dbReference type="InParanoid" id="Q5XJS5"/>
<dbReference type="OrthoDB" id="273067at2759"/>
<dbReference type="PhylomeDB" id="Q5XJS5"/>
<dbReference type="PRO" id="PR:Q5XJS5"/>
<dbReference type="Proteomes" id="UP000000437">
    <property type="component" value="Alternate scaffold 3"/>
</dbReference>
<dbReference type="Proteomes" id="UP000000437">
    <property type="component" value="Chromosome 3"/>
</dbReference>
<dbReference type="GO" id="GO:0016607">
    <property type="term" value="C:nuclear speck"/>
    <property type="evidence" value="ECO:0007669"/>
    <property type="project" value="UniProtKB-SubCell"/>
</dbReference>
<dbReference type="GO" id="GO:0000347">
    <property type="term" value="C:THO complex"/>
    <property type="evidence" value="ECO:0000318"/>
    <property type="project" value="GO_Central"/>
</dbReference>
<dbReference type="GO" id="GO:0000346">
    <property type="term" value="C:transcription export complex"/>
    <property type="evidence" value="ECO:0000318"/>
    <property type="project" value="GO_Central"/>
</dbReference>
<dbReference type="GO" id="GO:0003723">
    <property type="term" value="F:RNA binding"/>
    <property type="evidence" value="ECO:0007669"/>
    <property type="project" value="UniProtKB-KW"/>
</dbReference>
<dbReference type="GO" id="GO:0006915">
    <property type="term" value="P:apoptotic process"/>
    <property type="evidence" value="ECO:0007669"/>
    <property type="project" value="UniProtKB-KW"/>
</dbReference>
<dbReference type="GO" id="GO:0006406">
    <property type="term" value="P:mRNA export from nucleus"/>
    <property type="evidence" value="ECO:0000318"/>
    <property type="project" value="GO_Central"/>
</dbReference>
<dbReference type="GO" id="GO:0006397">
    <property type="term" value="P:mRNA processing"/>
    <property type="evidence" value="ECO:0007669"/>
    <property type="project" value="UniProtKB-KW"/>
</dbReference>
<dbReference type="GO" id="GO:0008380">
    <property type="term" value="P:RNA splicing"/>
    <property type="evidence" value="ECO:0007669"/>
    <property type="project" value="UniProtKB-KW"/>
</dbReference>
<dbReference type="Gene3D" id="2.130.10.10">
    <property type="entry name" value="YVTN repeat-like/Quinoprotein amine dehydrogenase"/>
    <property type="match status" value="1"/>
</dbReference>
<dbReference type="InterPro" id="IPR042626">
    <property type="entry name" value="THOC6"/>
</dbReference>
<dbReference type="InterPro" id="IPR015943">
    <property type="entry name" value="WD40/YVTN_repeat-like_dom_sf"/>
</dbReference>
<dbReference type="InterPro" id="IPR019775">
    <property type="entry name" value="WD40_repeat_CS"/>
</dbReference>
<dbReference type="InterPro" id="IPR036322">
    <property type="entry name" value="WD40_repeat_dom_sf"/>
</dbReference>
<dbReference type="InterPro" id="IPR001680">
    <property type="entry name" value="WD40_rpt"/>
</dbReference>
<dbReference type="PANTHER" id="PTHR44411">
    <property type="entry name" value="THO COMPLEX SUBUNIT 6 HOMOLOG"/>
    <property type="match status" value="1"/>
</dbReference>
<dbReference type="PANTHER" id="PTHR44411:SF1">
    <property type="entry name" value="THO COMPLEX SUBUNIT 6 HOMOLOG"/>
    <property type="match status" value="1"/>
</dbReference>
<dbReference type="Pfam" id="PF00400">
    <property type="entry name" value="WD40"/>
    <property type="match status" value="1"/>
</dbReference>
<dbReference type="SMART" id="SM00320">
    <property type="entry name" value="WD40"/>
    <property type="match status" value="3"/>
</dbReference>
<dbReference type="SUPFAM" id="SSF50978">
    <property type="entry name" value="WD40 repeat-like"/>
    <property type="match status" value="1"/>
</dbReference>
<dbReference type="PROSITE" id="PS00678">
    <property type="entry name" value="WD_REPEATS_1"/>
    <property type="match status" value="1"/>
</dbReference>
<dbReference type="PROSITE" id="PS50082">
    <property type="entry name" value="WD_REPEATS_2"/>
    <property type="match status" value="1"/>
</dbReference>
<dbReference type="PROSITE" id="PS50294">
    <property type="entry name" value="WD_REPEATS_REGION"/>
    <property type="match status" value="1"/>
</dbReference>
<feature type="chain" id="PRO_0000233161" description="THO complex subunit 6 homolog">
    <location>
        <begin position="1"/>
        <end position="323"/>
    </location>
</feature>
<feature type="repeat" description="WD 1">
    <location>
        <begin position="6"/>
        <end position="45"/>
    </location>
</feature>
<feature type="repeat" description="WD 2">
    <location>
        <begin position="58"/>
        <end position="96"/>
    </location>
</feature>
<feature type="repeat" description="WD 3">
    <location>
        <begin position="108"/>
        <end position="147"/>
    </location>
</feature>
<feature type="repeat" description="WD 4">
    <location>
        <begin position="150"/>
        <end position="189"/>
    </location>
</feature>
<feature type="repeat" description="WD 5">
    <location>
        <begin position="200"/>
        <end position="238"/>
    </location>
</feature>
<feature type="repeat" description="WD 6">
    <location>
        <begin position="279"/>
        <end position="321"/>
    </location>
</feature>
<evidence type="ECO:0000250" key="1"/>
<evidence type="ECO:0000250" key="2">
    <source>
        <dbReference type="UniProtKB" id="Q86W42"/>
    </source>
</evidence>
<evidence type="ECO:0000269" key="3">
    <source>
    </source>
</evidence>
<evidence type="ECO:0000305" key="4"/>
<organism>
    <name type="scientific">Danio rerio</name>
    <name type="common">Zebrafish</name>
    <name type="synonym">Brachydanio rerio</name>
    <dbReference type="NCBI Taxonomy" id="7955"/>
    <lineage>
        <taxon>Eukaryota</taxon>
        <taxon>Metazoa</taxon>
        <taxon>Chordata</taxon>
        <taxon>Craniata</taxon>
        <taxon>Vertebrata</taxon>
        <taxon>Euteleostomi</taxon>
        <taxon>Actinopterygii</taxon>
        <taxon>Neopterygii</taxon>
        <taxon>Teleostei</taxon>
        <taxon>Ostariophysi</taxon>
        <taxon>Cypriniformes</taxon>
        <taxon>Danionidae</taxon>
        <taxon>Danioninae</taxon>
        <taxon>Danio</taxon>
    </lineage>
</organism>
<sequence length="323" mass="35368">MGPVELLHMSVFSQSFSPCGRYLAAGNNYGEIAVFSLSAALSPDASERSQKPILNFTAHDGPVFSLLSTESHLLSAGNGEISAWSWAELIKKSTKAAWTRKPNYETSLEIPEINAMIINPKDNNLIVGGGDNNIHIMDMETGTFKSVLKGHTDYIHCLSFKEREGEILSGGEDGAVRIWDSRTNRPVHCIEVFKYEECARPQFGKWISCLATDSDWMLCGGGPSLSLWHLRSMSPTSVFPLSGCQREAVSYQDLIMSVGEGPYVSHCLHGGTVKAQIPCSPSSLNTLALNLKNTEHRVMTVGGSSHQIDVFTNFSYRALSLSF</sequence>
<protein>
    <recommendedName>
        <fullName>THO complex subunit 6 homolog</fullName>
    </recommendedName>
    <alternativeName>
        <fullName>WD repeat-containing protein 58</fullName>
    </alternativeName>
</protein>